<comment type="function">
    <text evidence="1">Divisome component that associates with the complex late in its assembly, after the Z-ring is formed, and is dependent on DivIC and PBP2B for its recruitment to the divisome. Together with EzrA, is a key component of the system that regulates PBP1 localization during cell cycle progression. Its main role could be the removal of PBP1 from the cell pole after pole maturation is completed. Also contributes to the recruitment of PBP1 to the division complex. Not essential for septum formation.</text>
</comment>
<comment type="subunit">
    <text evidence="1">Forms polymers through the coiled coil domains. Interacts with PBP1, MreC and EzrA.</text>
</comment>
<comment type="subcellular location">
    <subcellularLocation>
        <location evidence="1">Cytoplasm</location>
    </subcellularLocation>
    <text evidence="1">Shuttles between the lateral wall and the division site in a cell cycle-dependent manner.</text>
</comment>
<comment type="similarity">
    <text evidence="1">Belongs to the GpsB family.</text>
</comment>
<name>GPSB_STRT2</name>
<organism>
    <name type="scientific">Streptococcus thermophilus (strain ATCC BAA-250 / LMG 18311)</name>
    <dbReference type="NCBI Taxonomy" id="264199"/>
    <lineage>
        <taxon>Bacteria</taxon>
        <taxon>Bacillati</taxon>
        <taxon>Bacillota</taxon>
        <taxon>Bacilli</taxon>
        <taxon>Lactobacillales</taxon>
        <taxon>Streptococcaceae</taxon>
        <taxon>Streptococcus</taxon>
    </lineage>
</organism>
<accession>Q5M646</accession>
<proteinExistence type="inferred from homology"/>
<dbReference type="EMBL" id="CP000023">
    <property type="protein sequence ID" value="AAV59958.1"/>
    <property type="molecule type" value="Genomic_DNA"/>
</dbReference>
<dbReference type="RefSeq" id="WP_011225420.1">
    <property type="nucleotide sequence ID" value="NC_006448.1"/>
</dbReference>
<dbReference type="SMR" id="Q5M646"/>
<dbReference type="STRING" id="264199.stu0233"/>
<dbReference type="GeneID" id="66898164"/>
<dbReference type="KEGG" id="stl:stu0233"/>
<dbReference type="PATRIC" id="fig|264199.4.peg.239"/>
<dbReference type="eggNOG" id="COG3599">
    <property type="taxonomic scope" value="Bacteria"/>
</dbReference>
<dbReference type="HOGENOM" id="CLU_140309_1_0_9"/>
<dbReference type="Proteomes" id="UP000001170">
    <property type="component" value="Chromosome"/>
</dbReference>
<dbReference type="GO" id="GO:0005737">
    <property type="term" value="C:cytoplasm"/>
    <property type="evidence" value="ECO:0007669"/>
    <property type="project" value="UniProtKB-SubCell"/>
</dbReference>
<dbReference type="GO" id="GO:0051301">
    <property type="term" value="P:cell division"/>
    <property type="evidence" value="ECO:0007669"/>
    <property type="project" value="UniProtKB-UniRule"/>
</dbReference>
<dbReference type="GO" id="GO:0008360">
    <property type="term" value="P:regulation of cell shape"/>
    <property type="evidence" value="ECO:0007669"/>
    <property type="project" value="UniProtKB-UniRule"/>
</dbReference>
<dbReference type="Gene3D" id="6.10.250.660">
    <property type="match status" value="1"/>
</dbReference>
<dbReference type="HAMAP" id="MF_02011">
    <property type="entry name" value="GpsB"/>
    <property type="match status" value="1"/>
</dbReference>
<dbReference type="InterPro" id="IPR011229">
    <property type="entry name" value="Cell_cycle_GpsB"/>
</dbReference>
<dbReference type="InterPro" id="IPR019933">
    <property type="entry name" value="DivIVA_domain"/>
</dbReference>
<dbReference type="InterPro" id="IPR007793">
    <property type="entry name" value="DivIVA_fam"/>
</dbReference>
<dbReference type="NCBIfam" id="TIGR03544">
    <property type="entry name" value="DivI1A_domain"/>
    <property type="match status" value="1"/>
</dbReference>
<dbReference type="NCBIfam" id="NF010725">
    <property type="entry name" value="PRK14127.1"/>
    <property type="match status" value="1"/>
</dbReference>
<dbReference type="PANTHER" id="PTHR35794:SF1">
    <property type="entry name" value="CELL CYCLE PROTEIN GPSB"/>
    <property type="match status" value="1"/>
</dbReference>
<dbReference type="PANTHER" id="PTHR35794">
    <property type="entry name" value="CELL DIVISION PROTEIN DIVIVA"/>
    <property type="match status" value="1"/>
</dbReference>
<dbReference type="Pfam" id="PF05103">
    <property type="entry name" value="DivIVA"/>
    <property type="match status" value="1"/>
</dbReference>
<dbReference type="PIRSF" id="PIRSF029938">
    <property type="entry name" value="UCP029938"/>
    <property type="match status" value="1"/>
</dbReference>
<keyword id="KW-0131">Cell cycle</keyword>
<keyword id="KW-0132">Cell division</keyword>
<keyword id="KW-0133">Cell shape</keyword>
<keyword id="KW-0175">Coiled coil</keyword>
<keyword id="KW-0963">Cytoplasm</keyword>
<keyword id="KW-1185">Reference proteome</keyword>
<evidence type="ECO:0000255" key="1">
    <source>
        <dbReference type="HAMAP-Rule" id="MF_02011"/>
    </source>
</evidence>
<evidence type="ECO:0000256" key="2">
    <source>
        <dbReference type="SAM" id="MobiDB-lite"/>
    </source>
</evidence>
<gene>
    <name evidence="1" type="primary">gpsB</name>
    <name type="ordered locus">stu0233</name>
</gene>
<feature type="chain" id="PRO_0000337969" description="Cell cycle protein GpsB">
    <location>
        <begin position="1"/>
        <end position="110"/>
    </location>
</feature>
<feature type="region of interest" description="Disordered" evidence="2">
    <location>
        <begin position="59"/>
        <end position="79"/>
    </location>
</feature>
<feature type="coiled-coil region" evidence="1">
    <location>
        <begin position="37"/>
        <end position="63"/>
    </location>
</feature>
<feature type="compositionally biased region" description="Low complexity" evidence="2">
    <location>
        <begin position="60"/>
        <end position="75"/>
    </location>
</feature>
<reference key="1">
    <citation type="journal article" date="2004" name="Nat. Biotechnol.">
        <title>Complete sequence and comparative genome analysis of the dairy bacterium Streptococcus thermophilus.</title>
        <authorList>
            <person name="Bolotin A."/>
            <person name="Quinquis B."/>
            <person name="Renault P."/>
            <person name="Sorokin A."/>
            <person name="Ehrlich S.D."/>
            <person name="Kulakauskas S."/>
            <person name="Lapidus A."/>
            <person name="Goltsman E."/>
            <person name="Mazur M."/>
            <person name="Pusch G.D."/>
            <person name="Fonstein M."/>
            <person name="Overbeek R."/>
            <person name="Kyprides N."/>
            <person name="Purnelle B."/>
            <person name="Prozzi D."/>
            <person name="Ngui K."/>
            <person name="Masuy D."/>
            <person name="Hancy F."/>
            <person name="Burteau S."/>
            <person name="Boutry M."/>
            <person name="Delcour J."/>
            <person name="Goffeau A."/>
            <person name="Hols P."/>
        </authorList>
    </citation>
    <scope>NUCLEOTIDE SEQUENCE [LARGE SCALE GENOMIC DNA]</scope>
    <source>
        <strain>ATCC BAA-250 / LMG 18311</strain>
    </source>
</reference>
<sequence length="110" mass="12374">MAKINLTPKKIYEQEFKTSIRGYDKTEVDEFLDDVIKDYTVYIALVKELQEENAKLKAKATSAPASRPAYASATSEPSHATTNIASASNYDILKRISRLEKEVFGKQIVE</sequence>
<protein>
    <recommendedName>
        <fullName evidence="1">Cell cycle protein GpsB</fullName>
    </recommendedName>
    <alternativeName>
        <fullName evidence="1">Guiding PBP1-shuttling protein</fullName>
    </alternativeName>
</protein>